<comment type="function">
    <text evidence="1">Transcriptional repressor that controls expression of the genes required for the catabolism of sialic acids.</text>
</comment>
<comment type="similarity">
    <text evidence="1">Belongs to the NanR family.</text>
</comment>
<accession>A7MJD3</accession>
<proteinExistence type="inferred from homology"/>
<keyword id="KW-0238">DNA-binding</keyword>
<keyword id="KW-1185">Reference proteome</keyword>
<keyword id="KW-0678">Repressor</keyword>
<keyword id="KW-0804">Transcription</keyword>
<keyword id="KW-0805">Transcription regulation</keyword>
<gene>
    <name evidence="1" type="primary">nanR</name>
    <name type="ordered locus">ESA_03613</name>
</gene>
<name>NANR_CROS8</name>
<sequence length="260" mass="29391">MNPFDSQSEDASDAIGRSLGRRPLARKKLSEMVEEELEQMIRRREFAEGEPLPSERELMAFFNVGRPSVREALAALKRKGLVQISNGERARVSRPSADTIISELSGMAKDFLSHPGGIAHFEQLRLFFESSLVRYAAEKATDEQLERLTKALDINRQSLADNAQFIRSDVEFHRVLAEIPGNPIFMAIHVALLDWLIAARPAVPDAELIEHNNISYQQHIAIVDAIRKRDPDEADRALQTHLNSVFATWQALSQKKKSRK</sequence>
<dbReference type="EMBL" id="CP000783">
    <property type="protein sequence ID" value="ABU78823.1"/>
    <property type="molecule type" value="Genomic_DNA"/>
</dbReference>
<dbReference type="SMR" id="A7MJD3"/>
<dbReference type="KEGG" id="esa:ESA_03613"/>
<dbReference type="HOGENOM" id="CLU_017584_9_1_6"/>
<dbReference type="Proteomes" id="UP000000260">
    <property type="component" value="Chromosome"/>
</dbReference>
<dbReference type="GO" id="GO:0003677">
    <property type="term" value="F:DNA binding"/>
    <property type="evidence" value="ECO:0007669"/>
    <property type="project" value="UniProtKB-KW"/>
</dbReference>
<dbReference type="GO" id="GO:0003700">
    <property type="term" value="F:DNA-binding transcription factor activity"/>
    <property type="evidence" value="ECO:0007669"/>
    <property type="project" value="UniProtKB-UniRule"/>
</dbReference>
<dbReference type="GO" id="GO:0045892">
    <property type="term" value="P:negative regulation of DNA-templated transcription"/>
    <property type="evidence" value="ECO:0007669"/>
    <property type="project" value="UniProtKB-UniRule"/>
</dbReference>
<dbReference type="CDD" id="cd07377">
    <property type="entry name" value="WHTH_GntR"/>
    <property type="match status" value="1"/>
</dbReference>
<dbReference type="Gene3D" id="1.20.120.530">
    <property type="entry name" value="GntR ligand-binding domain-like"/>
    <property type="match status" value="1"/>
</dbReference>
<dbReference type="Gene3D" id="1.10.10.10">
    <property type="entry name" value="Winged helix-like DNA-binding domain superfamily/Winged helix DNA-binding domain"/>
    <property type="match status" value="1"/>
</dbReference>
<dbReference type="HAMAP" id="MF_01236">
    <property type="entry name" value="HTH_NanR"/>
    <property type="match status" value="1"/>
</dbReference>
<dbReference type="InterPro" id="IPR011711">
    <property type="entry name" value="GntR_C"/>
</dbReference>
<dbReference type="InterPro" id="IPR008920">
    <property type="entry name" value="TF_FadR/GntR_C"/>
</dbReference>
<dbReference type="InterPro" id="IPR000524">
    <property type="entry name" value="Tscrpt_reg_HTH_GntR"/>
</dbReference>
<dbReference type="InterPro" id="IPR023730">
    <property type="entry name" value="Tscrpt_reg_NanR"/>
</dbReference>
<dbReference type="InterPro" id="IPR036388">
    <property type="entry name" value="WH-like_DNA-bd_sf"/>
</dbReference>
<dbReference type="InterPro" id="IPR036390">
    <property type="entry name" value="WH_DNA-bd_sf"/>
</dbReference>
<dbReference type="NCBIfam" id="NF003011">
    <property type="entry name" value="PRK03837.1"/>
    <property type="match status" value="1"/>
</dbReference>
<dbReference type="PANTHER" id="PTHR43537:SF53">
    <property type="entry name" value="HTH-TYPE TRANSCRIPTIONAL REPRESSOR NANR"/>
    <property type="match status" value="1"/>
</dbReference>
<dbReference type="PANTHER" id="PTHR43537">
    <property type="entry name" value="TRANSCRIPTIONAL REGULATOR, GNTR FAMILY"/>
    <property type="match status" value="1"/>
</dbReference>
<dbReference type="Pfam" id="PF07729">
    <property type="entry name" value="FCD"/>
    <property type="match status" value="1"/>
</dbReference>
<dbReference type="Pfam" id="PF00392">
    <property type="entry name" value="GntR"/>
    <property type="match status" value="1"/>
</dbReference>
<dbReference type="PRINTS" id="PR00035">
    <property type="entry name" value="HTHGNTR"/>
</dbReference>
<dbReference type="SMART" id="SM00895">
    <property type="entry name" value="FCD"/>
    <property type="match status" value="1"/>
</dbReference>
<dbReference type="SMART" id="SM00345">
    <property type="entry name" value="HTH_GNTR"/>
    <property type="match status" value="1"/>
</dbReference>
<dbReference type="SUPFAM" id="SSF48008">
    <property type="entry name" value="GntR ligand-binding domain-like"/>
    <property type="match status" value="1"/>
</dbReference>
<dbReference type="SUPFAM" id="SSF46785">
    <property type="entry name" value="Winged helix' DNA-binding domain"/>
    <property type="match status" value="1"/>
</dbReference>
<dbReference type="PROSITE" id="PS50949">
    <property type="entry name" value="HTH_GNTR"/>
    <property type="match status" value="1"/>
</dbReference>
<organism>
    <name type="scientific">Cronobacter sakazakii (strain ATCC BAA-894)</name>
    <name type="common">Enterobacter sakazakii</name>
    <dbReference type="NCBI Taxonomy" id="290339"/>
    <lineage>
        <taxon>Bacteria</taxon>
        <taxon>Pseudomonadati</taxon>
        <taxon>Pseudomonadota</taxon>
        <taxon>Gammaproteobacteria</taxon>
        <taxon>Enterobacterales</taxon>
        <taxon>Enterobacteriaceae</taxon>
        <taxon>Cronobacter</taxon>
    </lineage>
</organism>
<feature type="chain" id="PRO_0000415297" description="HTH-type transcriptional repressor NanR">
    <location>
        <begin position="1"/>
        <end position="260"/>
    </location>
</feature>
<feature type="domain" description="HTH gntR-type" evidence="1">
    <location>
        <begin position="27"/>
        <end position="95"/>
    </location>
</feature>
<feature type="DNA-binding region" description="H-T-H motif" evidence="1">
    <location>
        <begin position="55"/>
        <end position="74"/>
    </location>
</feature>
<feature type="region of interest" description="Disordered" evidence="2">
    <location>
        <begin position="1"/>
        <end position="20"/>
    </location>
</feature>
<evidence type="ECO:0000255" key="1">
    <source>
        <dbReference type="HAMAP-Rule" id="MF_01236"/>
    </source>
</evidence>
<evidence type="ECO:0000256" key="2">
    <source>
        <dbReference type="SAM" id="MobiDB-lite"/>
    </source>
</evidence>
<reference key="1">
    <citation type="journal article" date="2010" name="PLoS ONE">
        <title>Genome sequence of Cronobacter sakazakii BAA-894 and comparative genomic hybridization analysis with other Cronobacter species.</title>
        <authorList>
            <person name="Kucerova E."/>
            <person name="Clifton S.W."/>
            <person name="Xia X.Q."/>
            <person name="Long F."/>
            <person name="Porwollik S."/>
            <person name="Fulton L."/>
            <person name="Fronick C."/>
            <person name="Minx P."/>
            <person name="Kyung K."/>
            <person name="Warren W."/>
            <person name="Fulton R."/>
            <person name="Feng D."/>
            <person name="Wollam A."/>
            <person name="Shah N."/>
            <person name="Bhonagiri V."/>
            <person name="Nash W.E."/>
            <person name="Hallsworth-Pepin K."/>
            <person name="Wilson R.K."/>
            <person name="McClelland M."/>
            <person name="Forsythe S.J."/>
        </authorList>
    </citation>
    <scope>NUCLEOTIDE SEQUENCE [LARGE SCALE GENOMIC DNA]</scope>
    <source>
        <strain>ATCC BAA-894</strain>
    </source>
</reference>
<protein>
    <recommendedName>
        <fullName evidence="1">HTH-type transcriptional repressor NanR</fullName>
    </recommendedName>
</protein>